<name>DNAA_RUMCH</name>
<protein>
    <recommendedName>
        <fullName evidence="1">Chromosomal replication initiator protein DnaA</fullName>
    </recommendedName>
</protein>
<sequence>MNVQLNEIWNRTLELLKGEMTEISFNTWILTIEPISIDSNTITLGVPADFNKGILEARYSYLIKNALRQISHRDYNIYFAIPSQTPVKPVAQEYTEDSNMSFLNPKYTFDTFVIGNGNRFAHAASLAVAEAPAKAYNPLFLYGGVGLGKTHLMHAIGHFVLSQNPALKVLYVSSEKFTNELINAIRDDKNEEFRYKYRNIDVLLIDDIQFIGGKERTEEEFFHTFNALYEANKQIIISSDKPPKEIPTLEDRLRSRFEWGLIADIAPPDLETRIAILRKKAQLENLDVPDDVMVFIADKVASNIRELEGALNRVIAYSTLTENIINVDMAVEALKDMLNNSKAIIINSKTIQEAVARYFHLKTDDLKSKRRSRDVSFPRQIAMYLCRDMTDMSLPKIGDEFGGRDHTTVIHACEKINNDLNNSTELKRTVEEIKKNITGG</sequence>
<reference key="1">
    <citation type="submission" date="2009-01" db="EMBL/GenBank/DDBJ databases">
        <title>Complete sequence of Clostridium cellulolyticum H10.</title>
        <authorList>
            <consortium name="US DOE Joint Genome Institute"/>
            <person name="Lucas S."/>
            <person name="Copeland A."/>
            <person name="Lapidus A."/>
            <person name="Glavina del Rio T."/>
            <person name="Dalin E."/>
            <person name="Tice H."/>
            <person name="Bruce D."/>
            <person name="Goodwin L."/>
            <person name="Pitluck S."/>
            <person name="Chertkov O."/>
            <person name="Saunders E."/>
            <person name="Brettin T."/>
            <person name="Detter J.C."/>
            <person name="Han C."/>
            <person name="Larimer F."/>
            <person name="Land M."/>
            <person name="Hauser L."/>
            <person name="Kyrpides N."/>
            <person name="Ivanova N."/>
            <person name="Zhou J."/>
            <person name="Richardson P."/>
        </authorList>
    </citation>
    <scope>NUCLEOTIDE SEQUENCE [LARGE SCALE GENOMIC DNA]</scope>
    <source>
        <strain>ATCC 35319 / DSM 5812 / JCM 6584 / H10</strain>
    </source>
</reference>
<feature type="chain" id="PRO_1000189790" description="Chromosomal replication initiator protein DnaA">
    <location>
        <begin position="1"/>
        <end position="440"/>
    </location>
</feature>
<feature type="region of interest" description="Domain I, interacts with DnaA modulators" evidence="1">
    <location>
        <begin position="1"/>
        <end position="93"/>
    </location>
</feature>
<feature type="region of interest" description="Domain II" evidence="1">
    <location>
        <begin position="94"/>
        <end position="101"/>
    </location>
</feature>
<feature type="region of interest" description="Domain III, AAA+ region" evidence="1">
    <location>
        <begin position="102"/>
        <end position="318"/>
    </location>
</feature>
<feature type="region of interest" description="Domain IV, binds dsDNA" evidence="1">
    <location>
        <begin position="319"/>
        <end position="440"/>
    </location>
</feature>
<feature type="binding site" evidence="1">
    <location>
        <position position="146"/>
    </location>
    <ligand>
        <name>ATP</name>
        <dbReference type="ChEBI" id="CHEBI:30616"/>
    </ligand>
</feature>
<feature type="binding site" evidence="1">
    <location>
        <position position="148"/>
    </location>
    <ligand>
        <name>ATP</name>
        <dbReference type="ChEBI" id="CHEBI:30616"/>
    </ligand>
</feature>
<feature type="binding site" evidence="1">
    <location>
        <position position="149"/>
    </location>
    <ligand>
        <name>ATP</name>
        <dbReference type="ChEBI" id="CHEBI:30616"/>
    </ligand>
</feature>
<feature type="binding site" evidence="1">
    <location>
        <position position="150"/>
    </location>
    <ligand>
        <name>ATP</name>
        <dbReference type="ChEBI" id="CHEBI:30616"/>
    </ligand>
</feature>
<dbReference type="EMBL" id="CP001348">
    <property type="protein sequence ID" value="ACL74389.1"/>
    <property type="molecule type" value="Genomic_DNA"/>
</dbReference>
<dbReference type="RefSeq" id="WP_012634456.1">
    <property type="nucleotide sequence ID" value="NC_011898.1"/>
</dbReference>
<dbReference type="SMR" id="B8I3R2"/>
<dbReference type="STRING" id="394503.Ccel_0001"/>
<dbReference type="KEGG" id="cce:Ccel_0001"/>
<dbReference type="eggNOG" id="COG0593">
    <property type="taxonomic scope" value="Bacteria"/>
</dbReference>
<dbReference type="HOGENOM" id="CLU_026910_3_1_9"/>
<dbReference type="OrthoDB" id="9807019at2"/>
<dbReference type="Proteomes" id="UP000001349">
    <property type="component" value="Chromosome"/>
</dbReference>
<dbReference type="GO" id="GO:0005737">
    <property type="term" value="C:cytoplasm"/>
    <property type="evidence" value="ECO:0007669"/>
    <property type="project" value="UniProtKB-SubCell"/>
</dbReference>
<dbReference type="GO" id="GO:0005886">
    <property type="term" value="C:plasma membrane"/>
    <property type="evidence" value="ECO:0007669"/>
    <property type="project" value="TreeGrafter"/>
</dbReference>
<dbReference type="GO" id="GO:0005524">
    <property type="term" value="F:ATP binding"/>
    <property type="evidence" value="ECO:0007669"/>
    <property type="project" value="UniProtKB-UniRule"/>
</dbReference>
<dbReference type="GO" id="GO:0016887">
    <property type="term" value="F:ATP hydrolysis activity"/>
    <property type="evidence" value="ECO:0007669"/>
    <property type="project" value="InterPro"/>
</dbReference>
<dbReference type="GO" id="GO:0003688">
    <property type="term" value="F:DNA replication origin binding"/>
    <property type="evidence" value="ECO:0007669"/>
    <property type="project" value="UniProtKB-UniRule"/>
</dbReference>
<dbReference type="GO" id="GO:0008289">
    <property type="term" value="F:lipid binding"/>
    <property type="evidence" value="ECO:0007669"/>
    <property type="project" value="UniProtKB-KW"/>
</dbReference>
<dbReference type="GO" id="GO:0006270">
    <property type="term" value="P:DNA replication initiation"/>
    <property type="evidence" value="ECO:0007669"/>
    <property type="project" value="UniProtKB-UniRule"/>
</dbReference>
<dbReference type="GO" id="GO:0006275">
    <property type="term" value="P:regulation of DNA replication"/>
    <property type="evidence" value="ECO:0007669"/>
    <property type="project" value="UniProtKB-UniRule"/>
</dbReference>
<dbReference type="CDD" id="cd00009">
    <property type="entry name" value="AAA"/>
    <property type="match status" value="1"/>
</dbReference>
<dbReference type="CDD" id="cd06571">
    <property type="entry name" value="Bac_DnaA_C"/>
    <property type="match status" value="1"/>
</dbReference>
<dbReference type="FunFam" id="1.10.1750.10:FF:000002">
    <property type="entry name" value="Chromosomal replication initiator protein DnaA"/>
    <property type="match status" value="1"/>
</dbReference>
<dbReference type="FunFam" id="1.10.8.60:FF:000003">
    <property type="entry name" value="Chromosomal replication initiator protein DnaA"/>
    <property type="match status" value="1"/>
</dbReference>
<dbReference type="FunFam" id="3.40.50.300:FF:000150">
    <property type="entry name" value="Chromosomal replication initiator protein DnaA"/>
    <property type="match status" value="1"/>
</dbReference>
<dbReference type="Gene3D" id="1.10.1750.10">
    <property type="match status" value="1"/>
</dbReference>
<dbReference type="Gene3D" id="1.10.8.60">
    <property type="match status" value="1"/>
</dbReference>
<dbReference type="Gene3D" id="3.30.300.180">
    <property type="match status" value="1"/>
</dbReference>
<dbReference type="Gene3D" id="3.40.50.300">
    <property type="entry name" value="P-loop containing nucleotide triphosphate hydrolases"/>
    <property type="match status" value="1"/>
</dbReference>
<dbReference type="HAMAP" id="MF_00377">
    <property type="entry name" value="DnaA_bact"/>
    <property type="match status" value="1"/>
</dbReference>
<dbReference type="InterPro" id="IPR003593">
    <property type="entry name" value="AAA+_ATPase"/>
</dbReference>
<dbReference type="InterPro" id="IPR001957">
    <property type="entry name" value="Chromosome_initiator_DnaA"/>
</dbReference>
<dbReference type="InterPro" id="IPR020591">
    <property type="entry name" value="Chromosome_initiator_DnaA-like"/>
</dbReference>
<dbReference type="InterPro" id="IPR018312">
    <property type="entry name" value="Chromosome_initiator_DnaA_CS"/>
</dbReference>
<dbReference type="InterPro" id="IPR013159">
    <property type="entry name" value="DnaA_C"/>
</dbReference>
<dbReference type="InterPro" id="IPR013317">
    <property type="entry name" value="DnaA_dom"/>
</dbReference>
<dbReference type="InterPro" id="IPR024633">
    <property type="entry name" value="DnaA_N_dom"/>
</dbReference>
<dbReference type="InterPro" id="IPR038454">
    <property type="entry name" value="DnaA_N_sf"/>
</dbReference>
<dbReference type="InterPro" id="IPR027417">
    <property type="entry name" value="P-loop_NTPase"/>
</dbReference>
<dbReference type="InterPro" id="IPR010921">
    <property type="entry name" value="Trp_repressor/repl_initiator"/>
</dbReference>
<dbReference type="NCBIfam" id="TIGR00362">
    <property type="entry name" value="DnaA"/>
    <property type="match status" value="1"/>
</dbReference>
<dbReference type="NCBIfam" id="NF010686">
    <property type="entry name" value="PRK14086.1"/>
    <property type="match status" value="1"/>
</dbReference>
<dbReference type="PANTHER" id="PTHR30050">
    <property type="entry name" value="CHROMOSOMAL REPLICATION INITIATOR PROTEIN DNAA"/>
    <property type="match status" value="1"/>
</dbReference>
<dbReference type="PANTHER" id="PTHR30050:SF2">
    <property type="entry name" value="CHROMOSOMAL REPLICATION INITIATOR PROTEIN DNAA"/>
    <property type="match status" value="1"/>
</dbReference>
<dbReference type="Pfam" id="PF00308">
    <property type="entry name" value="Bac_DnaA"/>
    <property type="match status" value="1"/>
</dbReference>
<dbReference type="Pfam" id="PF08299">
    <property type="entry name" value="Bac_DnaA_C"/>
    <property type="match status" value="1"/>
</dbReference>
<dbReference type="Pfam" id="PF11638">
    <property type="entry name" value="DnaA_N"/>
    <property type="match status" value="1"/>
</dbReference>
<dbReference type="PRINTS" id="PR00051">
    <property type="entry name" value="DNAA"/>
</dbReference>
<dbReference type="SMART" id="SM00382">
    <property type="entry name" value="AAA"/>
    <property type="match status" value="1"/>
</dbReference>
<dbReference type="SMART" id="SM00760">
    <property type="entry name" value="Bac_DnaA_C"/>
    <property type="match status" value="1"/>
</dbReference>
<dbReference type="SUPFAM" id="SSF52540">
    <property type="entry name" value="P-loop containing nucleoside triphosphate hydrolases"/>
    <property type="match status" value="1"/>
</dbReference>
<dbReference type="SUPFAM" id="SSF48295">
    <property type="entry name" value="TrpR-like"/>
    <property type="match status" value="1"/>
</dbReference>
<dbReference type="PROSITE" id="PS01008">
    <property type="entry name" value="DNAA"/>
    <property type="match status" value="1"/>
</dbReference>
<accession>B8I3R2</accession>
<evidence type="ECO:0000255" key="1">
    <source>
        <dbReference type="HAMAP-Rule" id="MF_00377"/>
    </source>
</evidence>
<organism>
    <name type="scientific">Ruminiclostridium cellulolyticum (strain ATCC 35319 / DSM 5812 / JCM 6584 / H10)</name>
    <name type="common">Clostridium cellulolyticum</name>
    <dbReference type="NCBI Taxonomy" id="394503"/>
    <lineage>
        <taxon>Bacteria</taxon>
        <taxon>Bacillati</taxon>
        <taxon>Bacillota</taxon>
        <taxon>Clostridia</taxon>
        <taxon>Eubacteriales</taxon>
        <taxon>Oscillospiraceae</taxon>
        <taxon>Ruminiclostridium</taxon>
    </lineage>
</organism>
<proteinExistence type="inferred from homology"/>
<gene>
    <name evidence="1" type="primary">dnaA</name>
    <name type="ordered locus">Ccel_0001</name>
</gene>
<keyword id="KW-0067">ATP-binding</keyword>
<keyword id="KW-0963">Cytoplasm</keyword>
<keyword id="KW-0235">DNA replication</keyword>
<keyword id="KW-0238">DNA-binding</keyword>
<keyword id="KW-0446">Lipid-binding</keyword>
<keyword id="KW-0547">Nucleotide-binding</keyword>
<keyword id="KW-1185">Reference proteome</keyword>
<comment type="function">
    <text evidence="1">Plays an essential role in the initiation and regulation of chromosomal replication. ATP-DnaA binds to the origin of replication (oriC) to initiate formation of the DNA replication initiation complex once per cell cycle. Binds the DnaA box (a 9 base pair repeat at the origin) and separates the double-stranded (ds)DNA. Forms a right-handed helical filament on oriC DNA; dsDNA binds to the exterior of the filament while single-stranded (ss)DNA is stabiized in the filament's interior. The ATP-DnaA-oriC complex binds and stabilizes one strand of the AT-rich DNA unwinding element (DUE), permitting loading of DNA polymerase. After initiation quickly degrades to an ADP-DnaA complex that is not apt for DNA replication. Binds acidic phospholipids.</text>
</comment>
<comment type="subunit">
    <text evidence="1">Oligomerizes as a right-handed, spiral filament on DNA at oriC.</text>
</comment>
<comment type="subcellular location">
    <subcellularLocation>
        <location evidence="1">Cytoplasm</location>
    </subcellularLocation>
</comment>
<comment type="domain">
    <text evidence="1">Domain I is involved in oligomerization and binding regulators, domain II is flexibile and of varying length in different bacteria, domain III forms the AAA+ region, while domain IV binds dsDNA.</text>
</comment>
<comment type="similarity">
    <text evidence="1">Belongs to the DnaA family.</text>
</comment>